<proteinExistence type="inferred from homology"/>
<organism>
    <name type="scientific">Mycobacterium tuberculosis (strain CDC 1551 / Oshkosh)</name>
    <dbReference type="NCBI Taxonomy" id="83331"/>
    <lineage>
        <taxon>Bacteria</taxon>
        <taxon>Bacillati</taxon>
        <taxon>Actinomycetota</taxon>
        <taxon>Actinomycetes</taxon>
        <taxon>Mycobacteriales</taxon>
        <taxon>Mycobacteriaceae</taxon>
        <taxon>Mycobacterium</taxon>
        <taxon>Mycobacterium tuberculosis complex</taxon>
    </lineage>
</organism>
<dbReference type="EMBL" id="AE000516">
    <property type="protein sequence ID" value="AAK45873.1"/>
    <property type="molecule type" value="Genomic_DNA"/>
</dbReference>
<dbReference type="PIR" id="H70762">
    <property type="entry name" value="H70762"/>
</dbReference>
<dbReference type="RefSeq" id="WP_003407771.1">
    <property type="nucleotide sequence ID" value="NZ_KK341227.1"/>
</dbReference>
<dbReference type="SMR" id="P9WNB4"/>
<dbReference type="KEGG" id="mtc:MT1606"/>
<dbReference type="PATRIC" id="fig|83331.31.peg.1728"/>
<dbReference type="HOGENOM" id="CLU_168367_0_0_11"/>
<dbReference type="Proteomes" id="UP000001020">
    <property type="component" value="Chromosome"/>
</dbReference>
<dbReference type="GO" id="GO:0045283">
    <property type="term" value="C:fumarate reductase complex"/>
    <property type="evidence" value="ECO:0007669"/>
    <property type="project" value="UniProtKB-UniRule"/>
</dbReference>
<dbReference type="GO" id="GO:0005886">
    <property type="term" value="C:plasma membrane"/>
    <property type="evidence" value="ECO:0007669"/>
    <property type="project" value="UniProtKB-SubCell"/>
</dbReference>
<dbReference type="GO" id="GO:0000104">
    <property type="term" value="F:succinate dehydrogenase activity"/>
    <property type="evidence" value="ECO:0007669"/>
    <property type="project" value="UniProtKB-UniRule"/>
</dbReference>
<dbReference type="GO" id="GO:0006106">
    <property type="term" value="P:fumarate metabolic process"/>
    <property type="evidence" value="ECO:0007669"/>
    <property type="project" value="InterPro"/>
</dbReference>
<dbReference type="Gene3D" id="1.20.1300.10">
    <property type="entry name" value="Fumarate reductase/succinate dehydrogenase, transmembrane subunit"/>
    <property type="match status" value="1"/>
</dbReference>
<dbReference type="HAMAP" id="MF_00709">
    <property type="entry name" value="Fumarate_red_D"/>
    <property type="match status" value="1"/>
</dbReference>
<dbReference type="InterPro" id="IPR003418">
    <property type="entry name" value="Fumarate_red_D"/>
</dbReference>
<dbReference type="InterPro" id="IPR034804">
    <property type="entry name" value="SQR/QFR_C/D"/>
</dbReference>
<dbReference type="NCBIfam" id="NF003977">
    <property type="entry name" value="PRK05470.1-1"/>
    <property type="match status" value="1"/>
</dbReference>
<dbReference type="Pfam" id="PF02313">
    <property type="entry name" value="Fumarate_red_D"/>
    <property type="match status" value="1"/>
</dbReference>
<dbReference type="PIRSF" id="PIRSF000179">
    <property type="entry name" value="FrdD"/>
    <property type="match status" value="1"/>
</dbReference>
<dbReference type="SUPFAM" id="SSF81343">
    <property type="entry name" value="Fumarate reductase respiratory complex transmembrane subunits"/>
    <property type="match status" value="1"/>
</dbReference>
<reference key="1">
    <citation type="journal article" date="2002" name="J. Bacteriol.">
        <title>Whole-genome comparison of Mycobacterium tuberculosis clinical and laboratory strains.</title>
        <authorList>
            <person name="Fleischmann R.D."/>
            <person name="Alland D."/>
            <person name="Eisen J.A."/>
            <person name="Carpenter L."/>
            <person name="White O."/>
            <person name="Peterson J.D."/>
            <person name="DeBoy R.T."/>
            <person name="Dodson R.J."/>
            <person name="Gwinn M.L."/>
            <person name="Haft D.H."/>
            <person name="Hickey E.K."/>
            <person name="Kolonay J.F."/>
            <person name="Nelson W.C."/>
            <person name="Umayam L.A."/>
            <person name="Ermolaeva M.D."/>
            <person name="Salzberg S.L."/>
            <person name="Delcher A."/>
            <person name="Utterback T.R."/>
            <person name="Weidman J.F."/>
            <person name="Khouri H.M."/>
            <person name="Gill J."/>
            <person name="Mikula A."/>
            <person name="Bishai W."/>
            <person name="Jacobs W.R. Jr."/>
            <person name="Venter J.C."/>
            <person name="Fraser C.M."/>
        </authorList>
    </citation>
    <scope>NUCLEOTIDE SEQUENCE [LARGE SCALE GENOMIC DNA]</scope>
    <source>
        <strain>CDC 1551 / Oshkosh</strain>
    </source>
</reference>
<sequence>MTPSTSDARSRRRSAEPFLWLLFSAGGMVTALVAPVLLLLFGLAFPLGWLDAPDHGHLLAMVRNPITKLVVLVLVVLALFHAAHRFRFVLDHGLQLGRFDRVIALWCYGMAVLGSATAGWMLLTM</sequence>
<protein>
    <recommendedName>
        <fullName evidence="1">Fumarate reductase subunit D</fullName>
    </recommendedName>
    <alternativeName>
        <fullName evidence="1">Quinol-fumarate reductase subunit D</fullName>
        <shortName evidence="1">QFR subunit D</shortName>
    </alternativeName>
</protein>
<accession>P9WNB4</accession>
<accession>L0T9S5</accession>
<accession>P67643</accession>
<accession>Q10763</accession>
<name>FRDD_MYCTO</name>
<gene>
    <name evidence="1" type="primary">frdD</name>
    <name type="ordered locus">MT1606</name>
</gene>
<comment type="function">
    <text evidence="1">Anchors the catalytic components of the fumarate reductase complex to the cell membrane, binds quinones.</text>
</comment>
<comment type="subunit">
    <text evidence="1">Part of an enzyme complex containing four subunits: a flavoprotein (FrdA), an iron-sulfur protein (FrdB), and two hydrophobic anchor proteins (FrdC and FrdD).</text>
</comment>
<comment type="subcellular location">
    <subcellularLocation>
        <location evidence="1">Cell membrane</location>
        <topology evidence="1">Multi-pass membrane protein</topology>
    </subcellularLocation>
</comment>
<comment type="similarity">
    <text evidence="1">Belongs to the FrdD family.</text>
</comment>
<evidence type="ECO:0000255" key="1">
    <source>
        <dbReference type="HAMAP-Rule" id="MF_00709"/>
    </source>
</evidence>
<keyword id="KW-1003">Cell membrane</keyword>
<keyword id="KW-0472">Membrane</keyword>
<keyword id="KW-1185">Reference proteome</keyword>
<keyword id="KW-0812">Transmembrane</keyword>
<keyword id="KW-1133">Transmembrane helix</keyword>
<feature type="chain" id="PRO_0000427156" description="Fumarate reductase subunit D">
    <location>
        <begin position="1"/>
        <end position="125"/>
    </location>
</feature>
<feature type="transmembrane region" description="Helical" evidence="1">
    <location>
        <begin position="29"/>
        <end position="49"/>
    </location>
</feature>
<feature type="transmembrane region" description="Helical" evidence="1">
    <location>
        <begin position="64"/>
        <end position="84"/>
    </location>
</feature>
<feature type="transmembrane region" description="Helical" evidence="1">
    <location>
        <begin position="102"/>
        <end position="122"/>
    </location>
</feature>